<name>PCDAB_PANTR</name>
<keyword id="KW-0106">Calcium</keyword>
<keyword id="KW-0130">Cell adhesion</keyword>
<keyword id="KW-1003">Cell membrane</keyword>
<keyword id="KW-0325">Glycoprotein</keyword>
<keyword id="KW-0472">Membrane</keyword>
<keyword id="KW-1185">Reference proteome</keyword>
<keyword id="KW-0677">Repeat</keyword>
<keyword id="KW-0732">Signal</keyword>
<keyword id="KW-0812">Transmembrane</keyword>
<keyword id="KW-1133">Transmembrane helix</keyword>
<reference key="1">
    <citation type="journal article" date="2005" name="Nature">
        <title>Initial sequence of the chimpanzee genome and comparison with the human genome.</title>
        <authorList>
            <consortium name="Chimpanzee sequencing and analysis consortium"/>
        </authorList>
    </citation>
    <scope>NUCLEOTIDE SEQUENCE [LARGE SCALE GENOMIC DNA]</scope>
</reference>
<reference key="2">
    <citation type="journal article" date="2005" name="Genetics">
        <title>Comparative genomics and diversifying selection of the clustered vertebrate protocadherin genes.</title>
        <authorList>
            <person name="Wu Q."/>
        </authorList>
    </citation>
    <scope>IDENTIFICATION</scope>
</reference>
<accession>Q5DRF3</accession>
<proteinExistence type="inferred from homology"/>
<feature type="signal peptide" evidence="2">
    <location>
        <begin position="1"/>
        <end position="29"/>
    </location>
</feature>
<feature type="chain" id="PRO_0000003905" description="Protocadherin alpha-11">
    <location>
        <begin position="30"/>
        <end position="949"/>
    </location>
</feature>
<feature type="topological domain" description="Extracellular" evidence="2">
    <location>
        <begin position="30"/>
        <end position="696"/>
    </location>
</feature>
<feature type="transmembrane region" description="Helical" evidence="2">
    <location>
        <begin position="697"/>
        <end position="717"/>
    </location>
</feature>
<feature type="topological domain" description="Cytoplasmic" evidence="2">
    <location>
        <begin position="718"/>
        <end position="949"/>
    </location>
</feature>
<feature type="domain" description="Cadherin 1" evidence="3">
    <location>
        <begin position="30"/>
        <end position="133"/>
    </location>
</feature>
<feature type="domain" description="Cadherin 2" evidence="3">
    <location>
        <begin position="157"/>
        <end position="242"/>
    </location>
</feature>
<feature type="domain" description="Cadherin 3" evidence="3">
    <location>
        <begin position="243"/>
        <end position="349"/>
    </location>
</feature>
<feature type="domain" description="Cadherin 4" evidence="3">
    <location>
        <begin position="350"/>
        <end position="454"/>
    </location>
</feature>
<feature type="domain" description="Cadherin 5" evidence="3">
    <location>
        <begin position="455"/>
        <end position="564"/>
    </location>
</feature>
<feature type="domain" description="Cadherin 6" evidence="3">
    <location>
        <begin position="580"/>
        <end position="677"/>
    </location>
</feature>
<feature type="repeat" description="PXXP 1">
    <location>
        <begin position="733"/>
        <end position="736"/>
    </location>
</feature>
<feature type="repeat" description="PXXP 2">
    <location>
        <begin position="773"/>
        <end position="776"/>
    </location>
</feature>
<feature type="repeat" description="PXXP 3">
    <location>
        <begin position="795"/>
        <end position="798"/>
    </location>
</feature>
<feature type="repeat" description="PXXP 4">
    <location>
        <begin position="831"/>
        <end position="834"/>
    </location>
</feature>
<feature type="repeat" description="PXXP 5">
    <location>
        <begin position="872"/>
        <end position="875"/>
    </location>
</feature>
<feature type="repeat" description="PXXP 6">
    <location>
        <begin position="890"/>
        <end position="893"/>
    </location>
</feature>
<feature type="region of interest" description="6 X 4 AA repeats of P-X-X-P">
    <location>
        <begin position="733"/>
        <end position="893"/>
    </location>
</feature>
<feature type="region of interest" description="Disordered" evidence="4">
    <location>
        <begin position="753"/>
        <end position="807"/>
    </location>
</feature>
<feature type="region of interest" description="Disordered" evidence="4">
    <location>
        <begin position="826"/>
        <end position="858"/>
    </location>
</feature>
<feature type="region of interest" description="Disordered" evidence="4">
    <location>
        <begin position="870"/>
        <end position="889"/>
    </location>
</feature>
<feature type="region of interest" description="Disordered" evidence="4">
    <location>
        <begin position="900"/>
        <end position="949"/>
    </location>
</feature>
<feature type="compositionally biased region" description="Basic and acidic residues" evidence="4">
    <location>
        <begin position="780"/>
        <end position="789"/>
    </location>
</feature>
<feature type="compositionally biased region" description="Basic and acidic residues" evidence="4">
    <location>
        <begin position="908"/>
        <end position="922"/>
    </location>
</feature>
<feature type="glycosylation site" description="N-linked (GlcNAc...) asparagine" evidence="2">
    <location>
        <position position="265"/>
    </location>
</feature>
<feature type="glycosylation site" description="N-linked (GlcNAc...) asparagine" evidence="2">
    <location>
        <position position="304"/>
    </location>
</feature>
<feature type="glycosylation site" description="N-linked (GlcNAc...) asparagine" evidence="2">
    <location>
        <position position="547"/>
    </location>
</feature>
<organism>
    <name type="scientific">Pan troglodytes</name>
    <name type="common">Chimpanzee</name>
    <dbReference type="NCBI Taxonomy" id="9598"/>
    <lineage>
        <taxon>Eukaryota</taxon>
        <taxon>Metazoa</taxon>
        <taxon>Chordata</taxon>
        <taxon>Craniata</taxon>
        <taxon>Vertebrata</taxon>
        <taxon>Euteleostomi</taxon>
        <taxon>Mammalia</taxon>
        <taxon>Eutheria</taxon>
        <taxon>Euarchontoglires</taxon>
        <taxon>Primates</taxon>
        <taxon>Haplorrhini</taxon>
        <taxon>Catarrhini</taxon>
        <taxon>Hominidae</taxon>
        <taxon>Pan</taxon>
    </lineage>
</organism>
<comment type="function">
    <text>Potential calcium-dependent cell-adhesion protein. May be involved in the establishment and maintenance of specific neuronal connections in the brain.</text>
</comment>
<comment type="subcellular location">
    <subcellularLocation>
        <location evidence="1">Cell membrane</location>
        <topology evidence="1">Single-pass type I membrane protein</topology>
    </subcellularLocation>
</comment>
<evidence type="ECO:0000250" key="1"/>
<evidence type="ECO:0000255" key="2"/>
<evidence type="ECO:0000255" key="3">
    <source>
        <dbReference type="PROSITE-ProRule" id="PRU00043"/>
    </source>
</evidence>
<evidence type="ECO:0000256" key="4">
    <source>
        <dbReference type="SAM" id="MobiDB-lite"/>
    </source>
</evidence>
<protein>
    <recommendedName>
        <fullName>Protocadherin alpha-11</fullName>
        <shortName>PCDH-alpha-11</shortName>
    </recommendedName>
</protein>
<gene>
    <name type="primary">PCDHA11</name>
</gene>
<sequence>MFGFQRRGLGTPRLQLWLLLLEFWEVGSGQLHYSVSEEAKHGTFVGRIAQDLGLELAELVPRLFRVASKTHGDLLEVNLQNGILFVNSRIDREELCGQSAECSIHLEVIVDRPLQVFHVNVEVKDINDNPPVFSLREQKLLIAESKQSDSRFPLEGASDADIEENALLTYRLSKNEYFSLDSPTNGKQIKRLSLILKKSLDREKTPELNLMVTATDGGKPELTGTVRLLVQVLDVNDNDPDFDKSEYKVSLMENAAKETLVLKLNATDRDEGVNGEVTYSLMSIKPNGRHLFTLDQNNGEVRVNGTLDYEENKFYKIEVQATDKGTPPMAGHCTVWVEILDTNDNSPEVAVTSLSLPVREDAQPSTVIALISVSDRDSGVNGQVTCSLTPHVPFKLVSTFKNYYSLVLDSALDRESVWAYELVVTARDGGSPSLWATARVSVEVADVNDNAPAFAQPEYTVFVKENNPPGCHIFTVSARDADAQENALVSYSLVERRLGDRALSSYVSVHAESGKVYALQPLDHEELELLQFQVSARDAGVPPLGSNVTLQVFVLDENDNAPALLATQAGSAGGAVNKLVPRSVGAGHVVAKVRAVDADSGYNAWLSYELQPAAGGSRIPFRVGLYTGEISTTRALDEADSPRHRLLVLVKDHGEPALTATATVLVSLVESGQAPKASSRTLVGAASPEAALVDVNVYLIIAICVVSSLLVLTLLLYTALWCSATPTEGACAPGKPTLVCSRAVGSWSYSQQRRQRVCSEEGPPKTDLMAFSPSLPLGLNKEEEGERQEPGSNHPGQPRQPNPDWRYSASLRAGMHSSVHLEEAGILRAGPGGPDQQWPTVSSATPEPEAGEVSPPVGAGVNSNSWTFKYGPGNPKQSGPGELPDKFIIPGSPAIISIRQEPANSQIDKSDFITFGKKEETKKKKKKKKGNKTQEKKEKGNSTTDNSDQ</sequence>
<dbReference type="SMR" id="Q5DRF3"/>
<dbReference type="FunCoup" id="Q5DRF3">
    <property type="interactions" value="70"/>
</dbReference>
<dbReference type="GlyCosmos" id="Q5DRF3">
    <property type="glycosylation" value="3 sites, No reported glycans"/>
</dbReference>
<dbReference type="InParanoid" id="Q5DRF3"/>
<dbReference type="Proteomes" id="UP000002277">
    <property type="component" value="Unplaced"/>
</dbReference>
<dbReference type="GO" id="GO:0005886">
    <property type="term" value="C:plasma membrane"/>
    <property type="evidence" value="ECO:0000318"/>
    <property type="project" value="GO_Central"/>
</dbReference>
<dbReference type="GO" id="GO:0005509">
    <property type="term" value="F:calcium ion binding"/>
    <property type="evidence" value="ECO:0007669"/>
    <property type="project" value="InterPro"/>
</dbReference>
<dbReference type="GO" id="GO:0007155">
    <property type="term" value="P:cell adhesion"/>
    <property type="evidence" value="ECO:0000318"/>
    <property type="project" value="GO_Central"/>
</dbReference>
<dbReference type="GO" id="GO:0007156">
    <property type="term" value="P:homophilic cell adhesion via plasma membrane adhesion molecules"/>
    <property type="evidence" value="ECO:0007669"/>
    <property type="project" value="InterPro"/>
</dbReference>
<dbReference type="GO" id="GO:0007399">
    <property type="term" value="P:nervous system development"/>
    <property type="evidence" value="ECO:0007669"/>
    <property type="project" value="UniProtKB-ARBA"/>
</dbReference>
<dbReference type="CDD" id="cd11304">
    <property type="entry name" value="Cadherin_repeat"/>
    <property type="match status" value="6"/>
</dbReference>
<dbReference type="FunFam" id="2.60.40.60:FF:000001">
    <property type="entry name" value="Protocadherin alpha 2"/>
    <property type="match status" value="1"/>
</dbReference>
<dbReference type="FunFam" id="2.60.40.60:FF:000002">
    <property type="entry name" value="Protocadherin alpha 2"/>
    <property type="match status" value="1"/>
</dbReference>
<dbReference type="FunFam" id="2.60.40.60:FF:000003">
    <property type="entry name" value="Protocadherin alpha 2"/>
    <property type="match status" value="1"/>
</dbReference>
<dbReference type="FunFam" id="2.60.40.60:FF:000006">
    <property type="entry name" value="Protocadherin alpha 2"/>
    <property type="match status" value="1"/>
</dbReference>
<dbReference type="FunFam" id="2.60.40.60:FF:000007">
    <property type="entry name" value="Protocadherin alpha 2"/>
    <property type="match status" value="1"/>
</dbReference>
<dbReference type="FunFam" id="2.60.40.60:FF:000076">
    <property type="entry name" value="Protocadherin alpha 2"/>
    <property type="match status" value="1"/>
</dbReference>
<dbReference type="Gene3D" id="2.60.40.60">
    <property type="entry name" value="Cadherins"/>
    <property type="match status" value="6"/>
</dbReference>
<dbReference type="InterPro" id="IPR002126">
    <property type="entry name" value="Cadherin-like_dom"/>
</dbReference>
<dbReference type="InterPro" id="IPR015919">
    <property type="entry name" value="Cadherin-like_sf"/>
</dbReference>
<dbReference type="InterPro" id="IPR031904">
    <property type="entry name" value="Cadherin_CBD"/>
</dbReference>
<dbReference type="InterPro" id="IPR020894">
    <property type="entry name" value="Cadherin_CS"/>
</dbReference>
<dbReference type="InterPro" id="IPR013164">
    <property type="entry name" value="Cadherin_N"/>
</dbReference>
<dbReference type="InterPro" id="IPR050174">
    <property type="entry name" value="Protocadherin/Cadherin-CA"/>
</dbReference>
<dbReference type="PANTHER" id="PTHR24028">
    <property type="entry name" value="CADHERIN-87A"/>
    <property type="match status" value="1"/>
</dbReference>
<dbReference type="PANTHER" id="PTHR24028:SF68">
    <property type="entry name" value="PROTOCADHERIN ALPHA-11"/>
    <property type="match status" value="1"/>
</dbReference>
<dbReference type="Pfam" id="PF00028">
    <property type="entry name" value="Cadherin"/>
    <property type="match status" value="5"/>
</dbReference>
<dbReference type="Pfam" id="PF08266">
    <property type="entry name" value="Cadherin_2"/>
    <property type="match status" value="1"/>
</dbReference>
<dbReference type="Pfam" id="PF15974">
    <property type="entry name" value="Cadherin_tail"/>
    <property type="match status" value="1"/>
</dbReference>
<dbReference type="PRINTS" id="PR00205">
    <property type="entry name" value="CADHERIN"/>
</dbReference>
<dbReference type="SMART" id="SM00112">
    <property type="entry name" value="CA"/>
    <property type="match status" value="6"/>
</dbReference>
<dbReference type="SUPFAM" id="SSF49313">
    <property type="entry name" value="Cadherin-like"/>
    <property type="match status" value="6"/>
</dbReference>
<dbReference type="PROSITE" id="PS00232">
    <property type="entry name" value="CADHERIN_1"/>
    <property type="match status" value="5"/>
</dbReference>
<dbReference type="PROSITE" id="PS50268">
    <property type="entry name" value="CADHERIN_2"/>
    <property type="match status" value="6"/>
</dbReference>